<accession>P61319</accession>
<accession>P39178</accession>
<accession>Q8X5H8</accession>
<comment type="function">
    <text evidence="1">Participates in the translocation of lipoproteins from the inner membrane to the outer membrane. Only forms a complex with a lipoprotein if the residue after the N-terminal Cys is not an aspartate (The Asp acts as a targeting signal to indicate that the lipoprotein should stay in the inner membrane) (By similarity).</text>
</comment>
<comment type="subunit">
    <text evidence="1">Monomer.</text>
</comment>
<comment type="subcellular location">
    <subcellularLocation>
        <location evidence="1">Periplasm</location>
    </subcellularLocation>
</comment>
<comment type="similarity">
    <text evidence="2">Belongs to the LolA family.</text>
</comment>
<comment type="sequence caution" evidence="2">
    <conflict type="erroneous initiation">
        <sequence resource="EMBL-CDS" id="AAN42483"/>
    </conflict>
</comment>
<comment type="sequence caution" evidence="2">
    <conflict type="erroneous initiation">
        <sequence resource="EMBL-CDS" id="AAP16355"/>
    </conflict>
</comment>
<keyword id="KW-0143">Chaperone</keyword>
<keyword id="KW-0574">Periplasm</keyword>
<keyword id="KW-0653">Protein transport</keyword>
<keyword id="KW-1185">Reference proteome</keyword>
<keyword id="KW-0732">Signal</keyword>
<keyword id="KW-0813">Transport</keyword>
<dbReference type="EMBL" id="AE005674">
    <property type="protein sequence ID" value="AAN42483.1"/>
    <property type="status" value="ALT_INIT"/>
    <property type="molecule type" value="Genomic_DNA"/>
</dbReference>
<dbReference type="EMBL" id="AE014073">
    <property type="protein sequence ID" value="AAP16355.1"/>
    <property type="status" value="ALT_INIT"/>
    <property type="molecule type" value="Genomic_DNA"/>
</dbReference>
<dbReference type="RefSeq" id="NP_706776.1">
    <property type="nucleotide sequence ID" value="NC_004337.2"/>
</dbReference>
<dbReference type="RefSeq" id="WP_001295343.1">
    <property type="nucleotide sequence ID" value="NZ_WPGW01000037.1"/>
</dbReference>
<dbReference type="SMR" id="P61319"/>
<dbReference type="STRING" id="198214.SF0850"/>
<dbReference type="PaxDb" id="198214-SF0850"/>
<dbReference type="GeneID" id="1027554"/>
<dbReference type="GeneID" id="93776529"/>
<dbReference type="KEGG" id="sfl:SF0850"/>
<dbReference type="KEGG" id="sfx:S0891"/>
<dbReference type="PATRIC" id="fig|198214.7.peg.980"/>
<dbReference type="HOGENOM" id="CLU_087560_1_1_6"/>
<dbReference type="Proteomes" id="UP000001006">
    <property type="component" value="Chromosome"/>
</dbReference>
<dbReference type="Proteomes" id="UP000002673">
    <property type="component" value="Chromosome"/>
</dbReference>
<dbReference type="GO" id="GO:0030288">
    <property type="term" value="C:outer membrane-bounded periplasmic space"/>
    <property type="evidence" value="ECO:0007669"/>
    <property type="project" value="TreeGrafter"/>
</dbReference>
<dbReference type="GO" id="GO:0044874">
    <property type="term" value="P:lipoprotein localization to outer membrane"/>
    <property type="evidence" value="ECO:0007669"/>
    <property type="project" value="UniProtKB-UniRule"/>
</dbReference>
<dbReference type="GO" id="GO:0042953">
    <property type="term" value="P:lipoprotein transport"/>
    <property type="evidence" value="ECO:0007669"/>
    <property type="project" value="InterPro"/>
</dbReference>
<dbReference type="CDD" id="cd16325">
    <property type="entry name" value="LolA"/>
    <property type="match status" value="1"/>
</dbReference>
<dbReference type="FunFam" id="2.50.20.10:FF:000001">
    <property type="entry name" value="Outer-membrane lipoprotein carrier protein"/>
    <property type="match status" value="1"/>
</dbReference>
<dbReference type="Gene3D" id="2.50.20.10">
    <property type="entry name" value="Lipoprotein localisation LolA/LolB/LppX"/>
    <property type="match status" value="1"/>
</dbReference>
<dbReference type="HAMAP" id="MF_00240">
    <property type="entry name" value="LolA"/>
    <property type="match status" value="1"/>
</dbReference>
<dbReference type="InterPro" id="IPR029046">
    <property type="entry name" value="LolA/LolB/LppX"/>
</dbReference>
<dbReference type="InterPro" id="IPR004564">
    <property type="entry name" value="OM_lipoprot_carrier_LolA-like"/>
</dbReference>
<dbReference type="InterPro" id="IPR018323">
    <property type="entry name" value="OM_lipoprot_carrier_LolA_Pbac"/>
</dbReference>
<dbReference type="NCBIfam" id="TIGR00547">
    <property type="entry name" value="lolA"/>
    <property type="match status" value="1"/>
</dbReference>
<dbReference type="PANTHER" id="PTHR35869">
    <property type="entry name" value="OUTER-MEMBRANE LIPOPROTEIN CARRIER PROTEIN"/>
    <property type="match status" value="1"/>
</dbReference>
<dbReference type="PANTHER" id="PTHR35869:SF1">
    <property type="entry name" value="OUTER-MEMBRANE LIPOPROTEIN CARRIER PROTEIN"/>
    <property type="match status" value="1"/>
</dbReference>
<dbReference type="Pfam" id="PF03548">
    <property type="entry name" value="LolA"/>
    <property type="match status" value="1"/>
</dbReference>
<dbReference type="SUPFAM" id="SSF89392">
    <property type="entry name" value="Prokaryotic lipoproteins and lipoprotein localization factors"/>
    <property type="match status" value="1"/>
</dbReference>
<feature type="signal peptide">
    <location>
        <begin position="1"/>
        <end position="21"/>
    </location>
</feature>
<feature type="chain" id="PRO_0000018277" description="Outer-membrane lipoprotein carrier protein">
    <location>
        <begin position="22"/>
        <end position="203"/>
    </location>
</feature>
<gene>
    <name type="primary">lolA</name>
    <name type="synonym">lplA</name>
    <name type="ordered locus">SF0850</name>
    <name type="ordered locus">S0891</name>
</gene>
<protein>
    <recommendedName>
        <fullName>Outer-membrane lipoprotein carrier protein</fullName>
    </recommendedName>
</protein>
<proteinExistence type="inferred from homology"/>
<sequence length="203" mass="22497">MKKIAITCALLSSLVASSVWADAASDLKSRLDKVSSFHASFTQKVTDGSGAAVQEGQGDLWVKRPNLFNWHMTQPDESILVSDGKTLWFYNPFVEQATATWLKDATGNTPFMLIARNQSSDWQQYNIKQNGDDFVLTPKASNGNLKQFTINVGRDGTIHQFSAVEQDDQRSSYQLKSQQNGAVDAAKFTFTPPQGVTVDDQRK</sequence>
<name>LOLA_SHIFL</name>
<evidence type="ECO:0000250" key="1"/>
<evidence type="ECO:0000305" key="2"/>
<reference key="1">
    <citation type="journal article" date="2002" name="Nucleic Acids Res.">
        <title>Genome sequence of Shigella flexneri 2a: insights into pathogenicity through comparison with genomes of Escherichia coli K12 and O157.</title>
        <authorList>
            <person name="Jin Q."/>
            <person name="Yuan Z."/>
            <person name="Xu J."/>
            <person name="Wang Y."/>
            <person name="Shen Y."/>
            <person name="Lu W."/>
            <person name="Wang J."/>
            <person name="Liu H."/>
            <person name="Yang J."/>
            <person name="Yang F."/>
            <person name="Zhang X."/>
            <person name="Zhang J."/>
            <person name="Yang G."/>
            <person name="Wu H."/>
            <person name="Qu D."/>
            <person name="Dong J."/>
            <person name="Sun L."/>
            <person name="Xue Y."/>
            <person name="Zhao A."/>
            <person name="Gao Y."/>
            <person name="Zhu J."/>
            <person name="Kan B."/>
            <person name="Ding K."/>
            <person name="Chen S."/>
            <person name="Cheng H."/>
            <person name="Yao Z."/>
            <person name="He B."/>
            <person name="Chen R."/>
            <person name="Ma D."/>
            <person name="Qiang B."/>
            <person name="Wen Y."/>
            <person name="Hou Y."/>
            <person name="Yu J."/>
        </authorList>
    </citation>
    <scope>NUCLEOTIDE SEQUENCE [LARGE SCALE GENOMIC DNA]</scope>
    <source>
        <strain>301 / Serotype 2a</strain>
    </source>
</reference>
<reference key="2">
    <citation type="journal article" date="2003" name="Infect. Immun.">
        <title>Complete genome sequence and comparative genomics of Shigella flexneri serotype 2a strain 2457T.</title>
        <authorList>
            <person name="Wei J."/>
            <person name="Goldberg M.B."/>
            <person name="Burland V."/>
            <person name="Venkatesan M.M."/>
            <person name="Deng W."/>
            <person name="Fournier G."/>
            <person name="Mayhew G.F."/>
            <person name="Plunkett G. III"/>
            <person name="Rose D.J."/>
            <person name="Darling A."/>
            <person name="Mau B."/>
            <person name="Perna N.T."/>
            <person name="Payne S.M."/>
            <person name="Runyen-Janecky L.J."/>
            <person name="Zhou S."/>
            <person name="Schwartz D.C."/>
            <person name="Blattner F.R."/>
        </authorList>
    </citation>
    <scope>NUCLEOTIDE SEQUENCE [LARGE SCALE GENOMIC DNA]</scope>
    <source>
        <strain>ATCC 700930 / 2457T / Serotype 2a</strain>
    </source>
</reference>
<organism>
    <name type="scientific">Shigella flexneri</name>
    <dbReference type="NCBI Taxonomy" id="623"/>
    <lineage>
        <taxon>Bacteria</taxon>
        <taxon>Pseudomonadati</taxon>
        <taxon>Pseudomonadota</taxon>
        <taxon>Gammaproteobacteria</taxon>
        <taxon>Enterobacterales</taxon>
        <taxon>Enterobacteriaceae</taxon>
        <taxon>Shigella</taxon>
    </lineage>
</organism>